<sequence length="122" mass="14176">MKKRALPIVIFVISLQQSSQSFAVLDLLDQLFHKILNLSSRSISCSNCLKHRLQIPYFCSLHKGLNTVHKFRSLRTFQQCHELSKSNQKCHLSVMTRQVLRSRIMRALPLIKESLLLAQFLQ</sequence>
<evidence type="ECO:0000255" key="1"/>
<evidence type="ECO:0000269" key="2">
    <source>
    </source>
</evidence>
<evidence type="ECO:0000303" key="3">
    <source>
    </source>
</evidence>
<evidence type="ECO:0000305" key="4"/>
<evidence type="ECO:0000305" key="5">
    <source>
    </source>
</evidence>
<organism>
    <name type="scientific">Plasmopara viticola</name>
    <name type="common">Downy mildew of grapevine</name>
    <name type="synonym">Botrytis viticola</name>
    <dbReference type="NCBI Taxonomy" id="143451"/>
    <lineage>
        <taxon>Eukaryota</taxon>
        <taxon>Sar</taxon>
        <taxon>Stramenopiles</taxon>
        <taxon>Oomycota</taxon>
        <taxon>Peronosporales</taxon>
        <taxon>Peronosporaceae</taxon>
        <taxon>Plasmopara</taxon>
    </lineage>
</organism>
<name>RLR80_PLAVT</name>
<protein>
    <recommendedName>
        <fullName evidence="3">Secreted RxLR effector protein 80</fullName>
    </recommendedName>
</protein>
<comment type="function">
    <text evidence="2">Secreted effector that dos not suppress the host cell death induced by cell death-inducing proteins.</text>
</comment>
<comment type="subcellular location">
    <subcellularLocation>
        <location evidence="2">Secreted</location>
    </subcellularLocation>
    <subcellularLocation>
        <location evidence="2">Host endoplasmic reticulum membrane</location>
    </subcellularLocation>
</comment>
<comment type="domain">
    <text evidence="5">Has the canonical translocation RxLR motif, but lacks the canonical EER motif, which characterizes most oomycete effectors identified so far.</text>
</comment>
<comment type="similarity">
    <text evidence="4">Belongs to the RxLR effector family.</text>
</comment>
<feature type="signal peptide" evidence="1">
    <location>
        <begin position="1"/>
        <end position="21"/>
    </location>
</feature>
<feature type="chain" id="PRO_0000447935" description="Secreted RxLR effector protein 80">
    <location>
        <begin position="22"/>
        <end position="122"/>
    </location>
</feature>
<feature type="short sequence motif" description="RxLR" evidence="5">
    <location>
        <begin position="72"/>
        <end position="75"/>
    </location>
</feature>
<gene>
    <name evidence="3" type="primary">RXLR80</name>
</gene>
<dbReference type="GO" id="GO:0005576">
    <property type="term" value="C:extracellular region"/>
    <property type="evidence" value="ECO:0007669"/>
    <property type="project" value="UniProtKB-SubCell"/>
</dbReference>
<dbReference type="GO" id="GO:0044167">
    <property type="term" value="C:host cell endoplasmic reticulum membrane"/>
    <property type="evidence" value="ECO:0007669"/>
    <property type="project" value="UniProtKB-SubCell"/>
</dbReference>
<dbReference type="GO" id="GO:0016020">
    <property type="term" value="C:membrane"/>
    <property type="evidence" value="ECO:0007669"/>
    <property type="project" value="UniProtKB-KW"/>
</dbReference>
<accession>P0CV26</accession>
<keyword id="KW-1038">Host endoplasmic reticulum</keyword>
<keyword id="KW-1043">Host membrane</keyword>
<keyword id="KW-0472">Membrane</keyword>
<keyword id="KW-0964">Secreted</keyword>
<keyword id="KW-0732">Signal</keyword>
<keyword id="KW-0843">Virulence</keyword>
<proteinExistence type="evidence at transcript level"/>
<reference key="1">
    <citation type="journal article" date="2018" name="Front. Plant Sci.">
        <title>In planta functional analysis and subcellular localization of the oomycete pathogen Plasmopara viticola candidate RXLR effector repertoire.</title>
        <authorList>
            <person name="Liu Y."/>
            <person name="Lan X."/>
            <person name="Song S."/>
            <person name="Yin L."/>
            <person name="Dry I.B."/>
            <person name="Qu J."/>
            <person name="Xiang J."/>
            <person name="Lu J."/>
        </authorList>
    </citation>
    <scope>NUCLEOTIDE SEQUENCE [MRNA]</scope>
    <scope>DOMAIN</scope>
    <scope>FUNCTION</scope>
    <scope>SUBCELLULAR LOCATION</scope>
</reference>